<gene>
    <name type="primary">MPT2</name>
    <name type="synonym">AT3</name>
    <name type="synonym">PHT3;2</name>
    <name type="ordered locus">At3g48850</name>
    <name type="ORF">T21J18_120</name>
</gene>
<sequence>MSDSSRSLIPSFLYSSDHRLFQATTMSTHLKSQPLISPTNSSVSSNGTSFAIATPNEKVEMYSPAYFAACTVAGMLSCGITHTAITPLDVIKCNMQIDPLKYKNITSAFKTTIKEQGLKGFTRGWSPTLLGYSAQGAFKYGLYEYAKKYYSDIVGPEYAAKYKTLIYLAGSASAEIVADVALCPMEAVKVRVQTQPGFARGLSDGLPKIIKSEGFRGLHKGLVPLWGRQIPYTMMKFATFENTVELIYKKVMPTPKEECSKPVQLGVSFAGGYIAGIFCAIISHPADNLVSFLNNSKGATVADAVKRLGLWGMLTRGLPLRIFMIGTLTGAQWVIYDAVKVLAGLPTTGGASPATALAPSVSA</sequence>
<feature type="transit peptide" description="Mitochondrion" evidence="2">
    <location>
        <begin position="1"/>
        <end status="unknown"/>
    </location>
</feature>
<feature type="chain" id="PRO_0000421696" description="Mitochondrial phosphate carrier protein 2, mitochondrial">
    <location>
        <begin status="unknown"/>
        <end position="363"/>
    </location>
</feature>
<feature type="topological domain" description="Mitochondrial intermembrane" evidence="2">
    <location>
        <begin status="unknown"/>
        <end position="64"/>
    </location>
</feature>
<feature type="transmembrane region" description="Helical; Name=1" evidence="2">
    <location>
        <begin position="65"/>
        <end position="85"/>
    </location>
</feature>
<feature type="topological domain" description="Mitochondrial matrix" evidence="2">
    <location>
        <begin position="86"/>
        <end position="123"/>
    </location>
</feature>
<feature type="transmembrane region" description="Helical; Name=2" evidence="2">
    <location>
        <begin position="124"/>
        <end position="143"/>
    </location>
</feature>
<feature type="topological domain" description="Mitochondrial intermembrane" evidence="2">
    <location>
        <begin position="144"/>
        <end position="164"/>
    </location>
</feature>
<feature type="transmembrane region" description="Helical; Name=3" evidence="2">
    <location>
        <begin position="165"/>
        <end position="185"/>
    </location>
</feature>
<feature type="topological domain" description="Mitochondrial matrix" evidence="2">
    <location>
        <begin position="186"/>
        <end position="220"/>
    </location>
</feature>
<feature type="transmembrane region" description="Helical; Name=4" evidence="2">
    <location>
        <begin position="221"/>
        <end position="240"/>
    </location>
</feature>
<feature type="topological domain" description="Mitochondrial intermembrane" evidence="2">
    <location>
        <begin position="241"/>
        <end position="261"/>
    </location>
</feature>
<feature type="transmembrane region" description="Helical; Name=5" evidence="2">
    <location>
        <begin position="262"/>
        <end position="282"/>
    </location>
</feature>
<feature type="topological domain" description="Mitochondrial matrix" evidence="2">
    <location>
        <begin position="283"/>
        <end position="321"/>
    </location>
</feature>
<feature type="transmembrane region" description="Helical; Name=6" evidence="2">
    <location>
        <begin position="322"/>
        <end position="342"/>
    </location>
</feature>
<feature type="topological domain" description="Mitochondrial intermembrane" evidence="2">
    <location>
        <begin position="343"/>
        <end position="363"/>
    </location>
</feature>
<feature type="repeat" description="Solcar 1">
    <location>
        <begin position="65"/>
        <end position="149"/>
    </location>
</feature>
<feature type="repeat" description="Solcar 2">
    <location>
        <begin position="162"/>
        <end position="246"/>
    </location>
</feature>
<feature type="repeat" description="Solcar 3">
    <location>
        <begin position="263"/>
        <end position="342"/>
    </location>
</feature>
<name>MPCP2_ARATH</name>
<comment type="function">
    <text evidence="3 4">Transport of phosphate groups from the cytosol to the mitochondrial matrix. Mediates salt stress tolerance through an ATP-dependent pathway and via modulation of the gibberellin metabolism.</text>
</comment>
<comment type="subcellular location">
    <subcellularLocation>
        <location evidence="1">Mitochondrion inner membrane</location>
        <topology evidence="1">Multi-pass membrane protein</topology>
    </subcellularLocation>
</comment>
<comment type="tissue specificity">
    <text evidence="4">Expressed in leaves. Strong expression in senescent leaves.</text>
</comment>
<comment type="induction">
    <text evidence="4">By salt stress.</text>
</comment>
<comment type="miscellaneous">
    <text evidence="6">Plants overexpressing MPT2/PHT3;2 display increased sensitivity to salt stress.</text>
</comment>
<comment type="similarity">
    <text evidence="5">Belongs to the mitochondrial carrier (TC 2.A.29) family.</text>
</comment>
<reference key="1">
    <citation type="journal article" date="2000" name="Nature">
        <title>Sequence and analysis of chromosome 3 of the plant Arabidopsis thaliana.</title>
        <authorList>
            <person name="Salanoubat M."/>
            <person name="Lemcke K."/>
            <person name="Rieger M."/>
            <person name="Ansorge W."/>
            <person name="Unseld M."/>
            <person name="Fartmann B."/>
            <person name="Valle G."/>
            <person name="Bloecker H."/>
            <person name="Perez-Alonso M."/>
            <person name="Obermaier B."/>
            <person name="Delseny M."/>
            <person name="Boutry M."/>
            <person name="Grivell L.A."/>
            <person name="Mache R."/>
            <person name="Puigdomenech P."/>
            <person name="De Simone V."/>
            <person name="Choisne N."/>
            <person name="Artiguenave F."/>
            <person name="Robert C."/>
            <person name="Brottier P."/>
            <person name="Wincker P."/>
            <person name="Cattolico L."/>
            <person name="Weissenbach J."/>
            <person name="Saurin W."/>
            <person name="Quetier F."/>
            <person name="Schaefer M."/>
            <person name="Mueller-Auer S."/>
            <person name="Gabel C."/>
            <person name="Fuchs M."/>
            <person name="Benes V."/>
            <person name="Wurmbach E."/>
            <person name="Drzonek H."/>
            <person name="Erfle H."/>
            <person name="Jordan N."/>
            <person name="Bangert S."/>
            <person name="Wiedelmann R."/>
            <person name="Kranz H."/>
            <person name="Voss H."/>
            <person name="Holland R."/>
            <person name="Brandt P."/>
            <person name="Nyakatura G."/>
            <person name="Vezzi A."/>
            <person name="D'Angelo M."/>
            <person name="Pallavicini A."/>
            <person name="Toppo S."/>
            <person name="Simionati B."/>
            <person name="Conrad A."/>
            <person name="Hornischer K."/>
            <person name="Kauer G."/>
            <person name="Loehnert T.-H."/>
            <person name="Nordsiek G."/>
            <person name="Reichelt J."/>
            <person name="Scharfe M."/>
            <person name="Schoen O."/>
            <person name="Bargues M."/>
            <person name="Terol J."/>
            <person name="Climent J."/>
            <person name="Navarro P."/>
            <person name="Collado C."/>
            <person name="Perez-Perez A."/>
            <person name="Ottenwaelder B."/>
            <person name="Duchemin D."/>
            <person name="Cooke R."/>
            <person name="Laudie M."/>
            <person name="Berger-Llauro C."/>
            <person name="Purnelle B."/>
            <person name="Masuy D."/>
            <person name="de Haan M."/>
            <person name="Maarse A.C."/>
            <person name="Alcaraz J.-P."/>
            <person name="Cottet A."/>
            <person name="Casacuberta E."/>
            <person name="Monfort A."/>
            <person name="Argiriou A."/>
            <person name="Flores M."/>
            <person name="Liguori R."/>
            <person name="Vitale D."/>
            <person name="Mannhaupt G."/>
            <person name="Haase D."/>
            <person name="Schoof H."/>
            <person name="Rudd S."/>
            <person name="Zaccaria P."/>
            <person name="Mewes H.-W."/>
            <person name="Mayer K.F.X."/>
            <person name="Kaul S."/>
            <person name="Town C.D."/>
            <person name="Koo H.L."/>
            <person name="Tallon L.J."/>
            <person name="Jenkins J."/>
            <person name="Rooney T."/>
            <person name="Rizzo M."/>
            <person name="Walts A."/>
            <person name="Utterback T."/>
            <person name="Fujii C.Y."/>
            <person name="Shea T.P."/>
            <person name="Creasy T.H."/>
            <person name="Haas B."/>
            <person name="Maiti R."/>
            <person name="Wu D."/>
            <person name="Peterson J."/>
            <person name="Van Aken S."/>
            <person name="Pai G."/>
            <person name="Militscher J."/>
            <person name="Sellers P."/>
            <person name="Gill J.E."/>
            <person name="Feldblyum T.V."/>
            <person name="Preuss D."/>
            <person name="Lin X."/>
            <person name="Nierman W.C."/>
            <person name="Salzberg S.L."/>
            <person name="White O."/>
            <person name="Venter J.C."/>
            <person name="Fraser C.M."/>
            <person name="Kaneko T."/>
            <person name="Nakamura Y."/>
            <person name="Sato S."/>
            <person name="Kato T."/>
            <person name="Asamizu E."/>
            <person name="Sasamoto S."/>
            <person name="Kimura T."/>
            <person name="Idesawa K."/>
            <person name="Kawashima K."/>
            <person name="Kishida Y."/>
            <person name="Kiyokawa C."/>
            <person name="Kohara M."/>
            <person name="Matsumoto M."/>
            <person name="Matsuno A."/>
            <person name="Muraki A."/>
            <person name="Nakayama S."/>
            <person name="Nakazaki N."/>
            <person name="Shinpo S."/>
            <person name="Takeuchi C."/>
            <person name="Wada T."/>
            <person name="Watanabe A."/>
            <person name="Yamada M."/>
            <person name="Yasuda M."/>
            <person name="Tabata S."/>
        </authorList>
    </citation>
    <scope>NUCLEOTIDE SEQUENCE [LARGE SCALE GENOMIC DNA]</scope>
    <source>
        <strain>cv. Columbia</strain>
    </source>
</reference>
<reference key="2">
    <citation type="journal article" date="2017" name="Plant J.">
        <title>Araport11: a complete reannotation of the Arabidopsis thaliana reference genome.</title>
        <authorList>
            <person name="Cheng C.Y."/>
            <person name="Krishnakumar V."/>
            <person name="Chan A.P."/>
            <person name="Thibaud-Nissen F."/>
            <person name="Schobel S."/>
            <person name="Town C.D."/>
        </authorList>
    </citation>
    <scope>GENOME REANNOTATION</scope>
    <source>
        <strain>cv. Columbia</strain>
    </source>
</reference>
<reference key="3">
    <citation type="submission" date="2008-07" db="EMBL/GenBank/DDBJ databases">
        <title>Arabidopsis ORF clones.</title>
        <authorList>
            <person name="de los Reyes C."/>
            <person name="Quan R."/>
            <person name="Chen H."/>
            <person name="Bautista V."/>
            <person name="Kim C.J."/>
            <person name="Ecker J.R."/>
        </authorList>
    </citation>
    <scope>NUCLEOTIDE SEQUENCE [MRNA]</scope>
    <source>
        <strain>cv. Columbia</strain>
    </source>
</reference>
<reference key="4">
    <citation type="journal article" date="2004" name="Mol. Microbiol.">
        <title>Redundancy in the function of mitochondrial phosphate transport in Saccharomyces cerevisiae and Arabidopsis thaliana.</title>
        <authorList>
            <person name="Hamel P."/>
            <person name="Saint-Georges Y."/>
            <person name="de Pinto B."/>
            <person name="Lachacinski N."/>
            <person name="Altamura N."/>
            <person name="Dujardin G."/>
        </authorList>
    </citation>
    <scope>FUNCTION</scope>
</reference>
<reference key="5">
    <citation type="journal article" date="2004" name="Trends Plant Sci.">
        <title>The growing family of mitochondrial carriers in Arabidopsis.</title>
        <authorList>
            <person name="Picault N."/>
            <person name="Hodges M."/>
            <person name="Palmieri L."/>
            <person name="Palmieri F."/>
        </authorList>
    </citation>
    <scope>GENE FAMILY</scope>
</reference>
<reference key="6">
    <citation type="journal article" date="2012" name="PLoS ONE">
        <title>The mitochondrial phosphate transporters modulate plant responses to salt stress via affecting ATP and gibberellin metabolism in Arabidopsis thaliana.</title>
        <authorList>
            <person name="Zhu W."/>
            <person name="Miao Q."/>
            <person name="Sun D."/>
            <person name="Yang G."/>
            <person name="Wu C."/>
            <person name="Huang J."/>
            <person name="Zheng C."/>
        </authorList>
    </citation>
    <scope>GENE FAMILY</scope>
    <scope>TISSUE SPECIFICITY</scope>
    <scope>INDUCTION BY SALT</scope>
    <scope>FUNCTION</scope>
</reference>
<proteinExistence type="evidence at transcript level"/>
<keyword id="KW-0472">Membrane</keyword>
<keyword id="KW-0496">Mitochondrion</keyword>
<keyword id="KW-0999">Mitochondrion inner membrane</keyword>
<keyword id="KW-1185">Reference proteome</keyword>
<keyword id="KW-0677">Repeat</keyword>
<keyword id="KW-0809">Transit peptide</keyword>
<keyword id="KW-0812">Transmembrane</keyword>
<keyword id="KW-1133">Transmembrane helix</keyword>
<keyword id="KW-0813">Transport</keyword>
<accession>Q9M2Z8</accession>
<dbReference type="EMBL" id="AL132963">
    <property type="protein sequence ID" value="CAB87913.1"/>
    <property type="molecule type" value="Genomic_DNA"/>
</dbReference>
<dbReference type="EMBL" id="CP002686">
    <property type="protein sequence ID" value="AEE78463.1"/>
    <property type="molecule type" value="Genomic_DNA"/>
</dbReference>
<dbReference type="EMBL" id="BT033111">
    <property type="protein sequence ID" value="ACF20466.1"/>
    <property type="molecule type" value="mRNA"/>
</dbReference>
<dbReference type="PIR" id="T49281">
    <property type="entry name" value="T49281"/>
</dbReference>
<dbReference type="RefSeq" id="NP_190454.1">
    <property type="nucleotide sequence ID" value="NM_114744.4"/>
</dbReference>
<dbReference type="SMR" id="Q9M2Z8"/>
<dbReference type="BioGRID" id="9364">
    <property type="interactions" value="18"/>
</dbReference>
<dbReference type="FunCoup" id="Q9M2Z8">
    <property type="interactions" value="2525"/>
</dbReference>
<dbReference type="STRING" id="3702.Q9M2Z8"/>
<dbReference type="iPTMnet" id="Q9M2Z8"/>
<dbReference type="PaxDb" id="3702-AT3G48850.1"/>
<dbReference type="ProteomicsDB" id="238898"/>
<dbReference type="EnsemblPlants" id="AT3G48850.1">
    <property type="protein sequence ID" value="AT3G48850.1"/>
    <property type="gene ID" value="AT3G48850"/>
</dbReference>
<dbReference type="GeneID" id="824046"/>
<dbReference type="Gramene" id="AT3G48850.1">
    <property type="protein sequence ID" value="AT3G48850.1"/>
    <property type="gene ID" value="AT3G48850"/>
</dbReference>
<dbReference type="KEGG" id="ath:AT3G48850"/>
<dbReference type="Araport" id="AT3G48850"/>
<dbReference type="TAIR" id="AT3G48850">
    <property type="gene designation" value="PHT3"/>
</dbReference>
<dbReference type="eggNOG" id="KOG0767">
    <property type="taxonomic scope" value="Eukaryota"/>
</dbReference>
<dbReference type="HOGENOM" id="CLU_039456_0_1_1"/>
<dbReference type="InParanoid" id="Q9M2Z8"/>
<dbReference type="OMA" id="LIYKKVM"/>
<dbReference type="OrthoDB" id="427452at2759"/>
<dbReference type="PhylomeDB" id="Q9M2Z8"/>
<dbReference type="PRO" id="PR:Q9M2Z8"/>
<dbReference type="Proteomes" id="UP000006548">
    <property type="component" value="Chromosome 3"/>
</dbReference>
<dbReference type="ExpressionAtlas" id="Q9M2Z8">
    <property type="expression patterns" value="baseline and differential"/>
</dbReference>
<dbReference type="GO" id="GO:0005743">
    <property type="term" value="C:mitochondrial inner membrane"/>
    <property type="evidence" value="ECO:0007669"/>
    <property type="project" value="UniProtKB-SubCell"/>
</dbReference>
<dbReference type="GO" id="GO:0003729">
    <property type="term" value="F:mRNA binding"/>
    <property type="evidence" value="ECO:0000314"/>
    <property type="project" value="TAIR"/>
</dbReference>
<dbReference type="GO" id="GO:0005315">
    <property type="term" value="F:phosphate transmembrane transporter activity"/>
    <property type="evidence" value="ECO:0007669"/>
    <property type="project" value="InterPro"/>
</dbReference>
<dbReference type="GO" id="GO:1990547">
    <property type="term" value="P:mitochondrial phosphate ion transmembrane transport"/>
    <property type="evidence" value="ECO:0007669"/>
    <property type="project" value="InterPro"/>
</dbReference>
<dbReference type="GO" id="GO:0009651">
    <property type="term" value="P:response to salt stress"/>
    <property type="evidence" value="ECO:0000315"/>
    <property type="project" value="TAIR"/>
</dbReference>
<dbReference type="FunFam" id="1.50.40.10:FF:000012">
    <property type="entry name" value="Phosphate carrier protein, mitochondrial"/>
    <property type="match status" value="1"/>
</dbReference>
<dbReference type="Gene3D" id="1.50.40.10">
    <property type="entry name" value="Mitochondrial carrier domain"/>
    <property type="match status" value="1"/>
</dbReference>
<dbReference type="InterPro" id="IPR018108">
    <property type="entry name" value="Mitochondrial_sb/sol_carrier"/>
</dbReference>
<dbReference type="InterPro" id="IPR023395">
    <property type="entry name" value="Mt_carrier_dom_sf"/>
</dbReference>
<dbReference type="InterPro" id="IPR044677">
    <property type="entry name" value="SLC25A3/Pic2/Mir1-like"/>
</dbReference>
<dbReference type="PANTHER" id="PTHR45671:SF31">
    <property type="entry name" value="MITOCHONDRIAL PHOSPHATE CARRIER PROTEIN 2, MITOCHONDRIAL"/>
    <property type="match status" value="1"/>
</dbReference>
<dbReference type="PANTHER" id="PTHR45671">
    <property type="entry name" value="SOLUTE CARRIER FAMILY 25 (MITOCHONDRIAL CARRIER PHOSPHATE CARRIER), MEMBER 3, LIKE-RELATED-RELATED"/>
    <property type="match status" value="1"/>
</dbReference>
<dbReference type="Pfam" id="PF00153">
    <property type="entry name" value="Mito_carr"/>
    <property type="match status" value="2"/>
</dbReference>
<dbReference type="SUPFAM" id="SSF103506">
    <property type="entry name" value="Mitochondrial carrier"/>
    <property type="match status" value="1"/>
</dbReference>
<dbReference type="PROSITE" id="PS50920">
    <property type="entry name" value="SOLCAR"/>
    <property type="match status" value="3"/>
</dbReference>
<organism>
    <name type="scientific">Arabidopsis thaliana</name>
    <name type="common">Mouse-ear cress</name>
    <dbReference type="NCBI Taxonomy" id="3702"/>
    <lineage>
        <taxon>Eukaryota</taxon>
        <taxon>Viridiplantae</taxon>
        <taxon>Streptophyta</taxon>
        <taxon>Embryophyta</taxon>
        <taxon>Tracheophyta</taxon>
        <taxon>Spermatophyta</taxon>
        <taxon>Magnoliopsida</taxon>
        <taxon>eudicotyledons</taxon>
        <taxon>Gunneridae</taxon>
        <taxon>Pentapetalae</taxon>
        <taxon>rosids</taxon>
        <taxon>malvids</taxon>
        <taxon>Brassicales</taxon>
        <taxon>Brassicaceae</taxon>
        <taxon>Camelineae</taxon>
        <taxon>Arabidopsis</taxon>
    </lineage>
</organism>
<protein>
    <recommendedName>
        <fullName>Mitochondrial phosphate carrier protein 2, mitochondrial</fullName>
    </recommendedName>
    <alternativeName>
        <fullName>Mitochondrial phosphate transporter 2</fullName>
        <shortName>MPT2</shortName>
    </alternativeName>
    <alternativeName>
        <fullName>Phosphate transporter 3;2</fullName>
    </alternativeName>
</protein>
<evidence type="ECO:0000250" key="1"/>
<evidence type="ECO:0000255" key="2"/>
<evidence type="ECO:0000269" key="3">
    <source>
    </source>
</evidence>
<evidence type="ECO:0000269" key="4">
    <source>
    </source>
</evidence>
<evidence type="ECO:0000305" key="5"/>
<evidence type="ECO:0000305" key="6">
    <source>
    </source>
</evidence>